<keyword id="KW-0007">Acetylation</keyword>
<keyword id="KW-0025">Alternative splicing</keyword>
<keyword id="KW-0597">Phosphoprotein</keyword>
<keyword id="KW-1185">Reference proteome</keyword>
<keyword id="KW-0677">Repeat</keyword>
<keyword id="KW-0346">Stress response</keyword>
<protein>
    <recommendedName>
        <fullName>Dehydrin ERD10</fullName>
    </recommendedName>
    <alternativeName>
        <fullName>Low-temperature-induced protein LTI45</fullName>
    </alternativeName>
</protein>
<gene>
    <name type="primary">ERD10</name>
    <name type="synonym">LTI29</name>
    <name type="synonym">LTI45</name>
    <name type="ordered locus">At1g20450</name>
    <name type="ORF">F5M15.21</name>
    <name type="ORF">F5M15_20</name>
</gene>
<comment type="alternative products">
    <event type="alternative splicing"/>
    <isoform>
        <id>P42759-1</id>
        <name>1</name>
        <sequence type="displayed"/>
    </isoform>
    <text>A number of isoforms are produced. According to EST sequences.</text>
</comment>
<comment type="tissue specificity">
    <text>In stems, cauline leaves, roots and flowers. Low levels found in maturing seeds. Absent in dry seeds.</text>
</comment>
<comment type="induction">
    <text>By dehydration, cold stress and abscisic acid (ABA). Induction by dehydration occurs after 1 hour and increases to a maximum after 10 hours. Cold stress induction peaks at 1 hour and 5 hours after start of cold exposure.</text>
</comment>
<comment type="similarity">
    <text evidence="3">Belongs to the plant dehydrin family.</text>
</comment>
<comment type="sequence caution" evidence="3">
    <conflict type="erroneous initiation">
        <sequence resource="EMBL-CDS" id="AAK82471"/>
    </conflict>
</comment>
<proteinExistence type="evidence at protein level"/>
<dbReference type="EMBL" id="D17714">
    <property type="protein sequence ID" value="BAA04568.1"/>
    <property type="molecule type" value="mRNA"/>
</dbReference>
<dbReference type="EMBL" id="X90958">
    <property type="protein sequence ID" value="CAA62448.1"/>
    <property type="molecule type" value="Genomic_DNA"/>
</dbReference>
<dbReference type="EMBL" id="AC027665">
    <property type="protein sequence ID" value="AAF79613.1"/>
    <property type="molecule type" value="Genomic_DNA"/>
</dbReference>
<dbReference type="EMBL" id="CP002684">
    <property type="protein sequence ID" value="AEE29973.1"/>
    <property type="molecule type" value="Genomic_DNA"/>
</dbReference>
<dbReference type="EMBL" id="AF360351">
    <property type="protein sequence ID" value="AAK38607.1"/>
    <property type="molecule type" value="mRNA"/>
</dbReference>
<dbReference type="EMBL" id="AY136407">
    <property type="protein sequence ID" value="AAM97073.1"/>
    <property type="molecule type" value="mRNA"/>
</dbReference>
<dbReference type="EMBL" id="AY142491">
    <property type="protein sequence ID" value="AAN13042.1"/>
    <property type="molecule type" value="mRNA"/>
</dbReference>
<dbReference type="EMBL" id="BT002131">
    <property type="protein sequence ID" value="AAN72142.1"/>
    <property type="molecule type" value="mRNA"/>
</dbReference>
<dbReference type="EMBL" id="AY048208">
    <property type="protein sequence ID" value="AAK82471.1"/>
    <property type="status" value="ALT_INIT"/>
    <property type="molecule type" value="mRNA"/>
</dbReference>
<dbReference type="EMBL" id="X77614">
    <property type="protein sequence ID" value="CAA54705.1"/>
    <property type="molecule type" value="mRNA"/>
</dbReference>
<dbReference type="EMBL" id="AF083731">
    <property type="protein sequence ID" value="AAN60289.1"/>
    <property type="molecule type" value="mRNA"/>
</dbReference>
<dbReference type="PIR" id="S60480">
    <property type="entry name" value="S60480"/>
</dbReference>
<dbReference type="RefSeq" id="NP_850947.1">
    <molecule id="P42759-1"/>
    <property type="nucleotide sequence ID" value="NM_180616.3"/>
</dbReference>
<dbReference type="BioGRID" id="23872">
    <property type="interactions" value="3"/>
</dbReference>
<dbReference type="FunCoup" id="P42759">
    <property type="interactions" value="75"/>
</dbReference>
<dbReference type="IntAct" id="P42759">
    <property type="interactions" value="1"/>
</dbReference>
<dbReference type="STRING" id="3702.P42759"/>
<dbReference type="TCDB" id="9.B.449.1.4">
    <property type="family name" value="the oxygen-regulated protein (orp) family"/>
</dbReference>
<dbReference type="iPTMnet" id="P42759"/>
<dbReference type="MetOSite" id="P42759"/>
<dbReference type="PaxDb" id="3702-AT1G20450.1"/>
<dbReference type="ProteomicsDB" id="220621">
    <molecule id="P42759-1"/>
</dbReference>
<dbReference type="EnsemblPlants" id="AT1G20450.1">
    <molecule id="P42759-1"/>
    <property type="protein sequence ID" value="AT1G20450.1"/>
    <property type="gene ID" value="AT1G20450"/>
</dbReference>
<dbReference type="GeneID" id="838633"/>
<dbReference type="Gramene" id="AT1G20450.1">
    <molecule id="P42759-1"/>
    <property type="protein sequence ID" value="AT1G20450.1"/>
    <property type="gene ID" value="AT1G20450"/>
</dbReference>
<dbReference type="KEGG" id="ath:AT1G20450"/>
<dbReference type="Araport" id="AT1G20450"/>
<dbReference type="TAIR" id="AT1G20450">
    <property type="gene designation" value="ERD10"/>
</dbReference>
<dbReference type="eggNOG" id="ENOG502SRR2">
    <property type="taxonomic scope" value="Eukaryota"/>
</dbReference>
<dbReference type="HOGENOM" id="CLU_081104_0_0_1"/>
<dbReference type="InParanoid" id="P42759"/>
<dbReference type="PhylomeDB" id="P42759"/>
<dbReference type="PRO" id="PR:P42759"/>
<dbReference type="Proteomes" id="UP000006548">
    <property type="component" value="Chromosome 1"/>
</dbReference>
<dbReference type="ExpressionAtlas" id="P42759">
    <property type="expression patterns" value="baseline and differential"/>
</dbReference>
<dbReference type="GO" id="GO:0005737">
    <property type="term" value="C:cytoplasm"/>
    <property type="evidence" value="ECO:0000314"/>
    <property type="project" value="TAIR"/>
</dbReference>
<dbReference type="GO" id="GO:0005829">
    <property type="term" value="C:cytosol"/>
    <property type="evidence" value="ECO:0007005"/>
    <property type="project" value="TAIR"/>
</dbReference>
<dbReference type="GO" id="GO:0019898">
    <property type="term" value="C:extrinsic component of membrane"/>
    <property type="evidence" value="ECO:0000314"/>
    <property type="project" value="CAFA"/>
</dbReference>
<dbReference type="GO" id="GO:0016020">
    <property type="term" value="C:membrane"/>
    <property type="evidence" value="ECO:0000314"/>
    <property type="project" value="TAIR"/>
</dbReference>
<dbReference type="GO" id="GO:0005634">
    <property type="term" value="C:nucleus"/>
    <property type="evidence" value="ECO:0007005"/>
    <property type="project" value="TAIR"/>
</dbReference>
<dbReference type="GO" id="GO:0009506">
    <property type="term" value="C:plasmodesma"/>
    <property type="evidence" value="ECO:0007005"/>
    <property type="project" value="TAIR"/>
</dbReference>
<dbReference type="GO" id="GO:0003779">
    <property type="term" value="F:actin binding"/>
    <property type="evidence" value="ECO:0000314"/>
    <property type="project" value="TAIR"/>
</dbReference>
<dbReference type="GO" id="GO:0005507">
    <property type="term" value="F:copper ion binding"/>
    <property type="evidence" value="ECO:0000314"/>
    <property type="project" value="CAFA"/>
</dbReference>
<dbReference type="GO" id="GO:0008289">
    <property type="term" value="F:lipid binding"/>
    <property type="evidence" value="ECO:0000269"/>
    <property type="project" value="DisProt"/>
</dbReference>
<dbReference type="GO" id="GO:0016151">
    <property type="term" value="F:nickel cation binding"/>
    <property type="evidence" value="ECO:0000314"/>
    <property type="project" value="CAFA"/>
</dbReference>
<dbReference type="GO" id="GO:0031210">
    <property type="term" value="F:phosphatidylcholine binding"/>
    <property type="evidence" value="ECO:0000314"/>
    <property type="project" value="CAFA"/>
</dbReference>
<dbReference type="GO" id="GO:0001786">
    <property type="term" value="F:phosphatidylserine binding"/>
    <property type="evidence" value="ECO:0000314"/>
    <property type="project" value="CAFA"/>
</dbReference>
<dbReference type="GO" id="GO:0044183">
    <property type="term" value="F:protein folding chaperone"/>
    <property type="evidence" value="ECO:0000314"/>
    <property type="project" value="DisProt"/>
</dbReference>
<dbReference type="GO" id="GO:0009631">
    <property type="term" value="P:cold acclimation"/>
    <property type="evidence" value="ECO:0000316"/>
    <property type="project" value="TAIR"/>
</dbReference>
<dbReference type="GO" id="GO:0009992">
    <property type="term" value="P:intracellular water homeostasis"/>
    <property type="evidence" value="ECO:0000314"/>
    <property type="project" value="DisProt"/>
</dbReference>
<dbReference type="GO" id="GO:0050821">
    <property type="term" value="P:protein stabilization"/>
    <property type="evidence" value="ECO:0000314"/>
    <property type="project" value="CAFA"/>
</dbReference>
<dbReference type="GO" id="GO:0090559">
    <property type="term" value="P:regulation of membrane permeability"/>
    <property type="evidence" value="ECO:0000314"/>
    <property type="project" value="CAFA"/>
</dbReference>
<dbReference type="GO" id="GO:0010029">
    <property type="term" value="P:regulation of seed germination"/>
    <property type="evidence" value="ECO:0000315"/>
    <property type="project" value="TAIR"/>
</dbReference>
<dbReference type="GO" id="GO:0009737">
    <property type="term" value="P:response to abscisic acid"/>
    <property type="evidence" value="ECO:0000270"/>
    <property type="project" value="TAIR"/>
</dbReference>
<dbReference type="GO" id="GO:0009409">
    <property type="term" value="P:response to cold"/>
    <property type="evidence" value="ECO:0000314"/>
    <property type="project" value="TAIR"/>
</dbReference>
<dbReference type="GO" id="GO:0009414">
    <property type="term" value="P:response to water deprivation"/>
    <property type="evidence" value="ECO:0000315"/>
    <property type="project" value="TAIR"/>
</dbReference>
<dbReference type="DisProt" id="DP00606"/>
<dbReference type="InterPro" id="IPR000167">
    <property type="entry name" value="Dehydrin"/>
</dbReference>
<dbReference type="InterPro" id="IPR030513">
    <property type="entry name" value="Dehydrin_CS"/>
</dbReference>
<dbReference type="PANTHER" id="PTHR33346:SF11">
    <property type="entry name" value="DEHYDRIN COR47-RELATED"/>
    <property type="match status" value="1"/>
</dbReference>
<dbReference type="PANTHER" id="PTHR33346">
    <property type="entry name" value="DEHYDRIN XERO 2-RELATED"/>
    <property type="match status" value="1"/>
</dbReference>
<dbReference type="Pfam" id="PF00257">
    <property type="entry name" value="Dehydrin"/>
    <property type="match status" value="2"/>
</dbReference>
<dbReference type="PROSITE" id="PS00315">
    <property type="entry name" value="DEHYDRIN_1"/>
    <property type="match status" value="1"/>
</dbReference>
<dbReference type="PROSITE" id="PS00823">
    <property type="entry name" value="DEHYDRIN_2"/>
    <property type="match status" value="2"/>
</dbReference>
<feature type="initiator methionine" description="Removed" evidence="4">
    <location>
        <position position="1"/>
    </location>
</feature>
<feature type="chain" id="PRO_0000100036" description="Dehydrin ERD10">
    <location>
        <begin position="2"/>
        <end position="260"/>
    </location>
</feature>
<feature type="repeat" description="1">
    <location>
        <begin position="184"/>
        <end position="204"/>
    </location>
</feature>
<feature type="repeat" description="2">
    <location>
        <begin position="227"/>
        <end position="247"/>
    </location>
</feature>
<feature type="region of interest" description="Disordered" evidence="2">
    <location>
        <begin position="1"/>
        <end position="187"/>
    </location>
</feature>
<feature type="region of interest" description="2 X 21 AA repeats, Lys-rich">
    <location>
        <begin position="184"/>
        <end position="247"/>
    </location>
</feature>
<feature type="region of interest" description="Disordered" evidence="2">
    <location>
        <begin position="197"/>
        <end position="216"/>
    </location>
</feature>
<feature type="region of interest" description="Disordered" evidence="2">
    <location>
        <begin position="240"/>
        <end position="260"/>
    </location>
</feature>
<feature type="compositionally biased region" description="Basic and acidic residues" evidence="2">
    <location>
        <begin position="26"/>
        <end position="44"/>
    </location>
</feature>
<feature type="compositionally biased region" description="Basic and acidic residues" evidence="2">
    <location>
        <begin position="67"/>
        <end position="102"/>
    </location>
</feature>
<feature type="compositionally biased region" description="Basic and acidic residues" evidence="2">
    <location>
        <begin position="130"/>
        <end position="140"/>
    </location>
</feature>
<feature type="compositionally biased region" description="Basic and acidic residues" evidence="2">
    <location>
        <begin position="148"/>
        <end position="162"/>
    </location>
</feature>
<feature type="compositionally biased region" description="Basic and acidic residues" evidence="2">
    <location>
        <begin position="176"/>
        <end position="187"/>
    </location>
</feature>
<feature type="compositionally biased region" description="Basic and acidic residues" evidence="2">
    <location>
        <begin position="197"/>
        <end position="207"/>
    </location>
</feature>
<feature type="modified residue" description="N-acetylalanine" evidence="4">
    <location>
        <position position="2"/>
    </location>
</feature>
<feature type="modified residue" description="Phosphoserine" evidence="1">
    <location>
        <position position="61"/>
    </location>
</feature>
<feature type="sequence conflict" description="In Ref. 7; AAN60289." evidence="3" ref="7">
    <original>Q</original>
    <variation>H</variation>
    <location>
        <position position="12"/>
    </location>
</feature>
<feature type="sequence conflict" description="In Ref. 3; CAA54705." evidence="3" ref="3">
    <original>H</original>
    <variation>G</variation>
    <location>
        <position position="56"/>
    </location>
</feature>
<feature type="sequence conflict" description="In Ref. 5; AAK38607." evidence="3" ref="5">
    <original>G</original>
    <variation>D</variation>
    <location>
        <position position="119"/>
    </location>
</feature>
<feature type="sequence conflict" description="In Ref. 3; CAA54705." evidence="3" ref="3">
    <original>Q</original>
    <variation>E</variation>
    <location>
        <position position="144"/>
    </location>
</feature>
<feature type="sequence conflict" description="In Ref. 5; AAK38607." evidence="3" ref="5">
    <original>D</original>
    <variation>G</variation>
    <location>
        <position position="260"/>
    </location>
</feature>
<name>ERD10_ARATH</name>
<evidence type="ECO:0000250" key="1">
    <source>
        <dbReference type="UniProtKB" id="P42763"/>
    </source>
</evidence>
<evidence type="ECO:0000256" key="2">
    <source>
        <dbReference type="SAM" id="MobiDB-lite"/>
    </source>
</evidence>
<evidence type="ECO:0000305" key="3"/>
<evidence type="ECO:0007744" key="4">
    <source>
    </source>
</evidence>
<accession>P42759</accession>
<accession>Q8H7D3</accession>
<accession>Q94AF8</accession>
<accession>Q94KJ0</accession>
<sequence length="260" mass="29548">MAEEYKNTVPEQETPKVATEESSAPEIKERGMFDFLKKKEEVKPQETTTLASEFEHKTQISEPESFVAKHEEEEHKPTLLEQLHQKHEEEEENKPSLLDKLHRSNSSSSSSSDEEGEDGEKKKKEKKKKIVEGDHVKTVEEENQGVMDRIKEKFPLGEKPGGDDVPVVTTMPAPHSVEDHKPEEEEKKGFMDKIKEKLPGHSKKPEDSQVVNTTPLVETATPIADIPEEKKGFMDKIKEKLPGYHAKTTGEEEKKEKVSD</sequence>
<organism>
    <name type="scientific">Arabidopsis thaliana</name>
    <name type="common">Mouse-ear cress</name>
    <dbReference type="NCBI Taxonomy" id="3702"/>
    <lineage>
        <taxon>Eukaryota</taxon>
        <taxon>Viridiplantae</taxon>
        <taxon>Streptophyta</taxon>
        <taxon>Embryophyta</taxon>
        <taxon>Tracheophyta</taxon>
        <taxon>Spermatophyta</taxon>
        <taxon>Magnoliopsida</taxon>
        <taxon>eudicotyledons</taxon>
        <taxon>Gunneridae</taxon>
        <taxon>Pentapetalae</taxon>
        <taxon>rosids</taxon>
        <taxon>malvids</taxon>
        <taxon>Brassicales</taxon>
        <taxon>Brassicaceae</taxon>
        <taxon>Camelineae</taxon>
        <taxon>Arabidopsis</taxon>
    </lineage>
</organism>
<reference key="1">
    <citation type="journal article" date="1994" name="Plant Cell Physiol.">
        <title>Characterization of two cDNAs (ERD10 and ERD14) corresponding to genes that respond rapidly to dehydration stress in Arabidopsis thaliana.</title>
        <authorList>
            <person name="Kiyosue T."/>
            <person name="Yamaguchi-Shinozaki K."/>
            <person name="Shinozaki K."/>
        </authorList>
    </citation>
    <scope>NUCLEOTIDE SEQUENCE [MRNA]</scope>
    <source>
        <strain>cv. Columbia</strain>
    </source>
</reference>
<reference key="2">
    <citation type="journal article" date="1995" name="Plant Mol. Biol.">
        <title>Structure and organization of two closely related low-temperature-induced dhn/lea/rab-like genes in Arabidopsis thaliana L. Heynh.</title>
        <authorList>
            <person name="Welin B.V."/>
            <person name="Olson A."/>
            <person name="Palva E.T."/>
        </authorList>
    </citation>
    <scope>NUCLEOTIDE SEQUENCE [GENOMIC DNA]</scope>
    <source>
        <strain>cv. Landsberg erecta</strain>
        <tissue>Leaf</tissue>
    </source>
</reference>
<reference key="3">
    <citation type="journal article" date="2000" name="Nature">
        <title>Sequence and analysis of chromosome 1 of the plant Arabidopsis thaliana.</title>
        <authorList>
            <person name="Theologis A."/>
            <person name="Ecker J.R."/>
            <person name="Palm C.J."/>
            <person name="Federspiel N.A."/>
            <person name="Kaul S."/>
            <person name="White O."/>
            <person name="Alonso J."/>
            <person name="Altafi H."/>
            <person name="Araujo R."/>
            <person name="Bowman C.L."/>
            <person name="Brooks S.Y."/>
            <person name="Buehler E."/>
            <person name="Chan A."/>
            <person name="Chao Q."/>
            <person name="Chen H."/>
            <person name="Cheuk R.F."/>
            <person name="Chin C.W."/>
            <person name="Chung M.K."/>
            <person name="Conn L."/>
            <person name="Conway A.B."/>
            <person name="Conway A.R."/>
            <person name="Creasy T.H."/>
            <person name="Dewar K."/>
            <person name="Dunn P."/>
            <person name="Etgu P."/>
            <person name="Feldblyum T.V."/>
            <person name="Feng J.-D."/>
            <person name="Fong B."/>
            <person name="Fujii C.Y."/>
            <person name="Gill J.E."/>
            <person name="Goldsmith A.D."/>
            <person name="Haas B."/>
            <person name="Hansen N.F."/>
            <person name="Hughes B."/>
            <person name="Huizar L."/>
            <person name="Hunter J.L."/>
            <person name="Jenkins J."/>
            <person name="Johnson-Hopson C."/>
            <person name="Khan S."/>
            <person name="Khaykin E."/>
            <person name="Kim C.J."/>
            <person name="Koo H.L."/>
            <person name="Kremenetskaia I."/>
            <person name="Kurtz D.B."/>
            <person name="Kwan A."/>
            <person name="Lam B."/>
            <person name="Langin-Hooper S."/>
            <person name="Lee A."/>
            <person name="Lee J.M."/>
            <person name="Lenz C.A."/>
            <person name="Li J.H."/>
            <person name="Li Y.-P."/>
            <person name="Lin X."/>
            <person name="Liu S.X."/>
            <person name="Liu Z.A."/>
            <person name="Luros J.S."/>
            <person name="Maiti R."/>
            <person name="Marziali A."/>
            <person name="Militscher J."/>
            <person name="Miranda M."/>
            <person name="Nguyen M."/>
            <person name="Nierman W.C."/>
            <person name="Osborne B.I."/>
            <person name="Pai G."/>
            <person name="Peterson J."/>
            <person name="Pham P.K."/>
            <person name="Rizzo M."/>
            <person name="Rooney T."/>
            <person name="Rowley D."/>
            <person name="Sakano H."/>
            <person name="Salzberg S.L."/>
            <person name="Schwartz J.R."/>
            <person name="Shinn P."/>
            <person name="Southwick A.M."/>
            <person name="Sun H."/>
            <person name="Tallon L.J."/>
            <person name="Tambunga G."/>
            <person name="Toriumi M.J."/>
            <person name="Town C.D."/>
            <person name="Utterback T."/>
            <person name="Van Aken S."/>
            <person name="Vaysberg M."/>
            <person name="Vysotskaia V.S."/>
            <person name="Walker M."/>
            <person name="Wu D."/>
            <person name="Yu G."/>
            <person name="Fraser C.M."/>
            <person name="Venter J.C."/>
            <person name="Davis R.W."/>
        </authorList>
    </citation>
    <scope>NUCLEOTIDE SEQUENCE [LARGE SCALE GENOMIC DNA]</scope>
    <source>
        <strain>cv. Columbia</strain>
    </source>
</reference>
<reference key="4">
    <citation type="journal article" date="2017" name="Plant J.">
        <title>Araport11: a complete reannotation of the Arabidopsis thaliana reference genome.</title>
        <authorList>
            <person name="Cheng C.Y."/>
            <person name="Krishnakumar V."/>
            <person name="Chan A.P."/>
            <person name="Thibaud-Nissen F."/>
            <person name="Schobel S."/>
            <person name="Town C.D."/>
        </authorList>
    </citation>
    <scope>GENOME REANNOTATION</scope>
    <source>
        <strain>cv. Columbia</strain>
    </source>
</reference>
<reference key="5">
    <citation type="journal article" date="2003" name="Science">
        <title>Empirical analysis of transcriptional activity in the Arabidopsis genome.</title>
        <authorList>
            <person name="Yamada K."/>
            <person name="Lim J."/>
            <person name="Dale J.M."/>
            <person name="Chen H."/>
            <person name="Shinn P."/>
            <person name="Palm C.J."/>
            <person name="Southwick A.M."/>
            <person name="Wu H.C."/>
            <person name="Kim C.J."/>
            <person name="Nguyen M."/>
            <person name="Pham P.K."/>
            <person name="Cheuk R.F."/>
            <person name="Karlin-Newmann G."/>
            <person name="Liu S.X."/>
            <person name="Lam B."/>
            <person name="Sakano H."/>
            <person name="Wu T."/>
            <person name="Yu G."/>
            <person name="Miranda M."/>
            <person name="Quach H.L."/>
            <person name="Tripp M."/>
            <person name="Chang C.H."/>
            <person name="Lee J.M."/>
            <person name="Toriumi M.J."/>
            <person name="Chan M.M."/>
            <person name="Tang C.C."/>
            <person name="Onodera C.S."/>
            <person name="Deng J.M."/>
            <person name="Akiyama K."/>
            <person name="Ansari Y."/>
            <person name="Arakawa T."/>
            <person name="Banh J."/>
            <person name="Banno F."/>
            <person name="Bowser L."/>
            <person name="Brooks S.Y."/>
            <person name="Carninci P."/>
            <person name="Chao Q."/>
            <person name="Choy N."/>
            <person name="Enju A."/>
            <person name="Goldsmith A.D."/>
            <person name="Gurjal M."/>
            <person name="Hansen N.F."/>
            <person name="Hayashizaki Y."/>
            <person name="Johnson-Hopson C."/>
            <person name="Hsuan V.W."/>
            <person name="Iida K."/>
            <person name="Karnes M."/>
            <person name="Khan S."/>
            <person name="Koesema E."/>
            <person name="Ishida J."/>
            <person name="Jiang P.X."/>
            <person name="Jones T."/>
            <person name="Kawai J."/>
            <person name="Kamiya A."/>
            <person name="Meyers C."/>
            <person name="Nakajima M."/>
            <person name="Narusaka M."/>
            <person name="Seki M."/>
            <person name="Sakurai T."/>
            <person name="Satou M."/>
            <person name="Tamse R."/>
            <person name="Vaysberg M."/>
            <person name="Wallender E.K."/>
            <person name="Wong C."/>
            <person name="Yamamura Y."/>
            <person name="Yuan S."/>
            <person name="Shinozaki K."/>
            <person name="Davis R.W."/>
            <person name="Theologis A."/>
            <person name="Ecker J.R."/>
        </authorList>
    </citation>
    <scope>NUCLEOTIDE SEQUENCE [LARGE SCALE MRNA]</scope>
    <source>
        <strain>cv. Columbia</strain>
    </source>
</reference>
<reference key="6">
    <citation type="journal article" date="1994" name="Plant Mol. Biol.">
        <title>Characterization and differential expression of dhn/lea/rab-like genes during cold acclimation and drought stress in Arabidopsis thaliana.</title>
        <authorList>
            <person name="Welin B.V."/>
            <person name="Olson A."/>
            <person name="Nylander M."/>
            <person name="Palva E.T."/>
        </authorList>
    </citation>
    <scope>NUCLEOTIDE SEQUENCE [MRNA] OF 56-260</scope>
    <source>
        <strain>cv. Landsberg erecta</strain>
        <tissue>Leaf</tissue>
    </source>
</reference>
<reference key="7">
    <citation type="submission" date="1998-08" db="EMBL/GenBank/DDBJ databases">
        <title>Signal peptide selection derived cDNAs from Arabidopsis thaliana leaves and guard cells.</title>
        <authorList>
            <person name="Stracke R."/>
            <person name="Palme K."/>
        </authorList>
    </citation>
    <scope>NUCLEOTIDE SEQUENCE [LARGE SCALE MRNA] OF 1-183</scope>
</reference>
<reference key="8">
    <citation type="journal article" date="2012" name="Mol. Cell. Proteomics">
        <title>Comparative large-scale characterisation of plant vs. mammal proteins reveals similar and idiosyncratic N-alpha acetylation features.</title>
        <authorList>
            <person name="Bienvenut W.V."/>
            <person name="Sumpton D."/>
            <person name="Martinez A."/>
            <person name="Lilla S."/>
            <person name="Espagne C."/>
            <person name="Meinnel T."/>
            <person name="Giglione C."/>
        </authorList>
    </citation>
    <scope>ACETYLATION [LARGE SCALE ANALYSIS] AT ALA-2</scope>
    <scope>CLEAVAGE OF INITIATOR METHIONINE [LARGE SCALE ANALYSIS]</scope>
    <scope>IDENTIFICATION BY MASS SPECTROMETRY [LARGE SCALE ANALYSIS]</scope>
</reference>